<comment type="function">
    <text evidence="1">NDH-1 shuttles electrons from NADH, via FMN and iron-sulfur (Fe-S) centers, to quinones in the respiratory chain. The immediate electron acceptor for the enzyme in this species is believed to be a menaquinone. Couples the redox reaction to proton translocation (for every two electrons transferred, four hydrogen ions are translocated across the cytoplasmic membrane), and thus conserves the redox energy in a proton gradient.</text>
</comment>
<comment type="catalytic activity">
    <reaction evidence="1">
        <text>a quinone + NADH + 5 H(+)(in) = a quinol + NAD(+) + 4 H(+)(out)</text>
        <dbReference type="Rhea" id="RHEA:57888"/>
        <dbReference type="ChEBI" id="CHEBI:15378"/>
        <dbReference type="ChEBI" id="CHEBI:24646"/>
        <dbReference type="ChEBI" id="CHEBI:57540"/>
        <dbReference type="ChEBI" id="CHEBI:57945"/>
        <dbReference type="ChEBI" id="CHEBI:132124"/>
    </reaction>
</comment>
<comment type="subunit">
    <text evidence="1">NDH-1 is composed of 14 different subunits. Subunits NuoB, C, D, E, F, and G constitute the peripheral sector of the complex.</text>
</comment>
<comment type="subcellular location">
    <subcellularLocation>
        <location evidence="1">Cell membrane</location>
        <topology evidence="1">Peripheral membrane protein</topology>
        <orientation evidence="1">Cytoplasmic side</orientation>
    </subcellularLocation>
</comment>
<comment type="similarity">
    <text evidence="1">Belongs to the complex I 49 kDa subunit family.</text>
</comment>
<keyword id="KW-1003">Cell membrane</keyword>
<keyword id="KW-0472">Membrane</keyword>
<keyword id="KW-0520">NAD</keyword>
<keyword id="KW-0874">Quinone</keyword>
<keyword id="KW-1278">Translocase</keyword>
<keyword id="KW-0813">Transport</keyword>
<organism>
    <name type="scientific">Rhodococcus jostii (strain RHA1)</name>
    <dbReference type="NCBI Taxonomy" id="101510"/>
    <lineage>
        <taxon>Bacteria</taxon>
        <taxon>Bacillati</taxon>
        <taxon>Actinomycetota</taxon>
        <taxon>Actinomycetes</taxon>
        <taxon>Mycobacteriales</taxon>
        <taxon>Nocardiaceae</taxon>
        <taxon>Rhodococcus</taxon>
    </lineage>
</organism>
<accession>Q0S447</accession>
<feature type="chain" id="PRO_0000357901" description="NADH-quinone oxidoreductase subunit D">
    <location>
        <begin position="1"/>
        <end position="438"/>
    </location>
</feature>
<dbReference type="EC" id="7.1.1.-" evidence="1"/>
<dbReference type="EMBL" id="CP000431">
    <property type="protein sequence ID" value="ABG97689.1"/>
    <property type="molecule type" value="Genomic_DNA"/>
</dbReference>
<dbReference type="RefSeq" id="WP_011597997.1">
    <property type="nucleotide sequence ID" value="NC_008268.1"/>
</dbReference>
<dbReference type="SMR" id="Q0S447"/>
<dbReference type="KEGG" id="rha:RHA1_ro05912"/>
<dbReference type="PATRIC" id="fig|101510.16.peg.5958"/>
<dbReference type="eggNOG" id="COG0649">
    <property type="taxonomic scope" value="Bacteria"/>
</dbReference>
<dbReference type="HOGENOM" id="CLU_015134_1_2_11"/>
<dbReference type="OrthoDB" id="9801496at2"/>
<dbReference type="Proteomes" id="UP000008710">
    <property type="component" value="Chromosome"/>
</dbReference>
<dbReference type="GO" id="GO:0005886">
    <property type="term" value="C:plasma membrane"/>
    <property type="evidence" value="ECO:0007669"/>
    <property type="project" value="UniProtKB-SubCell"/>
</dbReference>
<dbReference type="GO" id="GO:0051287">
    <property type="term" value="F:NAD binding"/>
    <property type="evidence" value="ECO:0007669"/>
    <property type="project" value="InterPro"/>
</dbReference>
<dbReference type="GO" id="GO:0050136">
    <property type="term" value="F:NADH:ubiquinone reductase (non-electrogenic) activity"/>
    <property type="evidence" value="ECO:0007669"/>
    <property type="project" value="UniProtKB-UniRule"/>
</dbReference>
<dbReference type="GO" id="GO:0048038">
    <property type="term" value="F:quinone binding"/>
    <property type="evidence" value="ECO:0007669"/>
    <property type="project" value="UniProtKB-KW"/>
</dbReference>
<dbReference type="FunFam" id="1.10.645.10:FF:000005">
    <property type="entry name" value="NADH-quinone oxidoreductase subunit D"/>
    <property type="match status" value="1"/>
</dbReference>
<dbReference type="Gene3D" id="1.10.645.10">
    <property type="entry name" value="Cytochrome-c3 Hydrogenase, chain B"/>
    <property type="match status" value="1"/>
</dbReference>
<dbReference type="HAMAP" id="MF_01358">
    <property type="entry name" value="NDH1_NuoD"/>
    <property type="match status" value="1"/>
</dbReference>
<dbReference type="InterPro" id="IPR001135">
    <property type="entry name" value="NADH_Q_OxRdtase_suD"/>
</dbReference>
<dbReference type="InterPro" id="IPR014029">
    <property type="entry name" value="NADH_UbQ_OxRdtase_49kDa_CS"/>
</dbReference>
<dbReference type="InterPro" id="IPR022885">
    <property type="entry name" value="NDH1_su_D/H"/>
</dbReference>
<dbReference type="InterPro" id="IPR029014">
    <property type="entry name" value="NiFe-Hase_large"/>
</dbReference>
<dbReference type="NCBIfam" id="TIGR01962">
    <property type="entry name" value="NuoD"/>
    <property type="match status" value="1"/>
</dbReference>
<dbReference type="NCBIfam" id="NF004739">
    <property type="entry name" value="PRK06075.1"/>
    <property type="match status" value="1"/>
</dbReference>
<dbReference type="PANTHER" id="PTHR11993:SF10">
    <property type="entry name" value="NADH DEHYDROGENASE [UBIQUINONE] IRON-SULFUR PROTEIN 2, MITOCHONDRIAL"/>
    <property type="match status" value="1"/>
</dbReference>
<dbReference type="PANTHER" id="PTHR11993">
    <property type="entry name" value="NADH-UBIQUINONE OXIDOREDUCTASE 49 KDA SUBUNIT"/>
    <property type="match status" value="1"/>
</dbReference>
<dbReference type="Pfam" id="PF00346">
    <property type="entry name" value="Complex1_49kDa"/>
    <property type="match status" value="1"/>
</dbReference>
<dbReference type="SUPFAM" id="SSF56762">
    <property type="entry name" value="HydB/Nqo4-like"/>
    <property type="match status" value="1"/>
</dbReference>
<dbReference type="PROSITE" id="PS00535">
    <property type="entry name" value="COMPLEX1_49K"/>
    <property type="match status" value="1"/>
</dbReference>
<protein>
    <recommendedName>
        <fullName evidence="1">NADH-quinone oxidoreductase subunit D</fullName>
        <ecNumber evidence="1">7.1.1.-</ecNumber>
    </recommendedName>
    <alternativeName>
        <fullName evidence="1">NADH dehydrogenase I subunit D</fullName>
    </alternativeName>
    <alternativeName>
        <fullName evidence="1">NDH-1 subunit D</fullName>
    </alternativeName>
</protein>
<evidence type="ECO:0000255" key="1">
    <source>
        <dbReference type="HAMAP-Rule" id="MF_01358"/>
    </source>
</evidence>
<sequence length="438" mass="48114">MSEDTVFTVAGQDWDDVVDAVKASSGGGGSEGGEERIVVNMGPQHPSTHGVLRLILEIEGETVTEARCGIGYLHTGIEKNLEYRTWTQGVTFVTRMDYLSPFFNETAYCLGVEKLLDITDEVPERASVIRVMLMELNRISSHLVALATGGMELGAVTAMLFGFRERELVLDVFEMITGLRMNHAYIRPGGLSQDLPEGAVEKVRELLALMPERLRDMENLLNDNRIWKGRTQGIGYLDLTGCMALGITGPMLRATGLPHDLRKSQPYCGYENYEFDVSTDTGCDAYGRYLIRVDEMKESLKIVEQCLDKLRPGPIMAEDKKIAWPADLTLGPDGLGNSPGHVREIMDSSMESLIHHFKLVTEGFRVPPGQVYVAVESPRGELGVHMVSDGGTRPFRVHFRDPSFTNLQSVAATCEGGMVADVIAAVASIDPVMGGVDR</sequence>
<reference key="1">
    <citation type="journal article" date="2006" name="Proc. Natl. Acad. Sci. U.S.A.">
        <title>The complete genome of Rhodococcus sp. RHA1 provides insights into a catabolic powerhouse.</title>
        <authorList>
            <person name="McLeod M.P."/>
            <person name="Warren R.L."/>
            <person name="Hsiao W.W.L."/>
            <person name="Araki N."/>
            <person name="Myhre M."/>
            <person name="Fernandes C."/>
            <person name="Miyazawa D."/>
            <person name="Wong W."/>
            <person name="Lillquist A.L."/>
            <person name="Wang D."/>
            <person name="Dosanjh M."/>
            <person name="Hara H."/>
            <person name="Petrescu A."/>
            <person name="Morin R.D."/>
            <person name="Yang G."/>
            <person name="Stott J.M."/>
            <person name="Schein J.E."/>
            <person name="Shin H."/>
            <person name="Smailus D."/>
            <person name="Siddiqui A.S."/>
            <person name="Marra M.A."/>
            <person name="Jones S.J.M."/>
            <person name="Holt R."/>
            <person name="Brinkman F.S.L."/>
            <person name="Miyauchi K."/>
            <person name="Fukuda M."/>
            <person name="Davies J.E."/>
            <person name="Mohn W.W."/>
            <person name="Eltis L.D."/>
        </authorList>
    </citation>
    <scope>NUCLEOTIDE SEQUENCE [LARGE SCALE GENOMIC DNA]</scope>
    <source>
        <strain>RHA1</strain>
    </source>
</reference>
<proteinExistence type="inferred from homology"/>
<gene>
    <name evidence="1" type="primary">nuoD</name>
    <name type="ordered locus">RHA1_ro05912</name>
</gene>
<name>NUOD_RHOJR</name>